<dbReference type="EMBL" id="CP000962">
    <property type="protein sequence ID" value="ACA55001.1"/>
    <property type="molecule type" value="Genomic_DNA"/>
</dbReference>
<dbReference type="RefSeq" id="WP_012343034.1">
    <property type="nucleotide sequence ID" value="NC_010520.1"/>
</dbReference>
<dbReference type="SMR" id="B1L0B3"/>
<dbReference type="KEGG" id="cbl:CLK_2464"/>
<dbReference type="HOGENOM" id="CLU_087936_3_0_9"/>
<dbReference type="GO" id="GO:0005737">
    <property type="term" value="C:cytoplasm"/>
    <property type="evidence" value="ECO:0007669"/>
    <property type="project" value="UniProtKB-SubCell"/>
</dbReference>
<dbReference type="GO" id="GO:0009379">
    <property type="term" value="C:Holliday junction helicase complex"/>
    <property type="evidence" value="ECO:0007669"/>
    <property type="project" value="InterPro"/>
</dbReference>
<dbReference type="GO" id="GO:0048476">
    <property type="term" value="C:Holliday junction resolvase complex"/>
    <property type="evidence" value="ECO:0007669"/>
    <property type="project" value="UniProtKB-UniRule"/>
</dbReference>
<dbReference type="GO" id="GO:0005524">
    <property type="term" value="F:ATP binding"/>
    <property type="evidence" value="ECO:0007669"/>
    <property type="project" value="InterPro"/>
</dbReference>
<dbReference type="GO" id="GO:0000400">
    <property type="term" value="F:four-way junction DNA binding"/>
    <property type="evidence" value="ECO:0007669"/>
    <property type="project" value="UniProtKB-UniRule"/>
</dbReference>
<dbReference type="GO" id="GO:0009378">
    <property type="term" value="F:four-way junction helicase activity"/>
    <property type="evidence" value="ECO:0007669"/>
    <property type="project" value="InterPro"/>
</dbReference>
<dbReference type="GO" id="GO:0006310">
    <property type="term" value="P:DNA recombination"/>
    <property type="evidence" value="ECO:0007669"/>
    <property type="project" value="UniProtKB-UniRule"/>
</dbReference>
<dbReference type="GO" id="GO:0006281">
    <property type="term" value="P:DNA repair"/>
    <property type="evidence" value="ECO:0007669"/>
    <property type="project" value="UniProtKB-UniRule"/>
</dbReference>
<dbReference type="CDD" id="cd14332">
    <property type="entry name" value="UBA_RuvA_C"/>
    <property type="match status" value="1"/>
</dbReference>
<dbReference type="Gene3D" id="1.10.150.20">
    <property type="entry name" value="5' to 3' exonuclease, C-terminal subdomain"/>
    <property type="match status" value="1"/>
</dbReference>
<dbReference type="Gene3D" id="1.10.8.10">
    <property type="entry name" value="DNA helicase RuvA subunit, C-terminal domain"/>
    <property type="match status" value="1"/>
</dbReference>
<dbReference type="Gene3D" id="2.40.50.140">
    <property type="entry name" value="Nucleic acid-binding proteins"/>
    <property type="match status" value="1"/>
</dbReference>
<dbReference type="HAMAP" id="MF_00031">
    <property type="entry name" value="DNA_HJ_migration_RuvA"/>
    <property type="match status" value="1"/>
</dbReference>
<dbReference type="InterPro" id="IPR013849">
    <property type="entry name" value="DNA_helicase_Holl-junc_RuvA_I"/>
</dbReference>
<dbReference type="InterPro" id="IPR003583">
    <property type="entry name" value="Hlx-hairpin-Hlx_DNA-bd_motif"/>
</dbReference>
<dbReference type="InterPro" id="IPR012340">
    <property type="entry name" value="NA-bd_OB-fold"/>
</dbReference>
<dbReference type="InterPro" id="IPR000085">
    <property type="entry name" value="RuvA"/>
</dbReference>
<dbReference type="InterPro" id="IPR010994">
    <property type="entry name" value="RuvA_2-like"/>
</dbReference>
<dbReference type="InterPro" id="IPR011114">
    <property type="entry name" value="RuvA_C"/>
</dbReference>
<dbReference type="InterPro" id="IPR036267">
    <property type="entry name" value="RuvA_C_sf"/>
</dbReference>
<dbReference type="NCBIfam" id="TIGR00084">
    <property type="entry name" value="ruvA"/>
    <property type="match status" value="1"/>
</dbReference>
<dbReference type="Pfam" id="PF14520">
    <property type="entry name" value="HHH_5"/>
    <property type="match status" value="1"/>
</dbReference>
<dbReference type="Pfam" id="PF07499">
    <property type="entry name" value="RuvA_C"/>
    <property type="match status" value="1"/>
</dbReference>
<dbReference type="Pfam" id="PF01330">
    <property type="entry name" value="RuvA_N"/>
    <property type="match status" value="1"/>
</dbReference>
<dbReference type="SMART" id="SM00278">
    <property type="entry name" value="HhH1"/>
    <property type="match status" value="2"/>
</dbReference>
<dbReference type="SUPFAM" id="SSF46929">
    <property type="entry name" value="DNA helicase RuvA subunit, C-terminal domain"/>
    <property type="match status" value="1"/>
</dbReference>
<dbReference type="SUPFAM" id="SSF50249">
    <property type="entry name" value="Nucleic acid-binding proteins"/>
    <property type="match status" value="1"/>
</dbReference>
<dbReference type="SUPFAM" id="SSF47781">
    <property type="entry name" value="RuvA domain 2-like"/>
    <property type="match status" value="1"/>
</dbReference>
<accession>B1L0B3</accession>
<comment type="function">
    <text evidence="1">The RuvA-RuvB-RuvC complex processes Holliday junction (HJ) DNA during genetic recombination and DNA repair, while the RuvA-RuvB complex plays an important role in the rescue of blocked DNA replication forks via replication fork reversal (RFR). RuvA specifically binds to HJ cruciform DNA, conferring on it an open structure. The RuvB hexamer acts as an ATP-dependent pump, pulling dsDNA into and through the RuvAB complex. HJ branch migration allows RuvC to scan DNA until it finds its consensus sequence, where it cleaves and resolves the cruciform DNA.</text>
</comment>
<comment type="subunit">
    <text evidence="1">Homotetramer. Forms an RuvA(8)-RuvB(12)-Holliday junction (HJ) complex. HJ DNA is sandwiched between 2 RuvA tetramers; dsDNA enters through RuvA and exits via RuvB. An RuvB hexamer assembles on each DNA strand where it exits the tetramer. Each RuvB hexamer is contacted by two RuvA subunits (via domain III) on 2 adjacent RuvB subunits; this complex drives branch migration. In the full resolvosome a probable DNA-RuvA(4)-RuvB(12)-RuvC(2) complex forms which resolves the HJ.</text>
</comment>
<comment type="subcellular location">
    <subcellularLocation>
        <location evidence="1">Cytoplasm</location>
    </subcellularLocation>
</comment>
<comment type="domain">
    <text evidence="1">Has three domains with a flexible linker between the domains II and III and assumes an 'L' shape. Domain III is highly mobile and contacts RuvB.</text>
</comment>
<comment type="similarity">
    <text evidence="1">Belongs to the RuvA family.</text>
</comment>
<reference key="1">
    <citation type="journal article" date="2007" name="PLoS ONE">
        <title>Analysis of the neurotoxin complex genes in Clostridium botulinum A1-A4 and B1 strains: BoNT/A3, /Ba4 and /B1 clusters are located within plasmids.</title>
        <authorList>
            <person name="Smith T.J."/>
            <person name="Hill K.K."/>
            <person name="Foley B.T."/>
            <person name="Detter J.C."/>
            <person name="Munk A.C."/>
            <person name="Bruce D.C."/>
            <person name="Doggett N.A."/>
            <person name="Smith L.A."/>
            <person name="Marks J.D."/>
            <person name="Xie G."/>
            <person name="Brettin T.S."/>
        </authorList>
    </citation>
    <scope>NUCLEOTIDE SEQUENCE [LARGE SCALE GENOMIC DNA]</scope>
    <source>
        <strain>Loch Maree / Type A3</strain>
    </source>
</reference>
<protein>
    <recommendedName>
        <fullName evidence="1">Holliday junction branch migration complex subunit RuvA</fullName>
    </recommendedName>
</protein>
<feature type="chain" id="PRO_1000090305" description="Holliday junction branch migration complex subunit RuvA">
    <location>
        <begin position="1"/>
        <end position="197"/>
    </location>
</feature>
<feature type="region of interest" description="Domain I" evidence="1">
    <location>
        <begin position="1"/>
        <end position="64"/>
    </location>
</feature>
<feature type="region of interest" description="Domain II" evidence="1">
    <location>
        <begin position="65"/>
        <end position="143"/>
    </location>
</feature>
<feature type="region of interest" description="Flexible linker" evidence="1">
    <location>
        <begin position="144"/>
        <end position="148"/>
    </location>
</feature>
<feature type="region of interest" description="Domain III" evidence="1">
    <location>
        <begin position="149"/>
        <end position="197"/>
    </location>
</feature>
<organism>
    <name type="scientific">Clostridium botulinum (strain Loch Maree / Type A3)</name>
    <dbReference type="NCBI Taxonomy" id="498214"/>
    <lineage>
        <taxon>Bacteria</taxon>
        <taxon>Bacillati</taxon>
        <taxon>Bacillota</taxon>
        <taxon>Clostridia</taxon>
        <taxon>Eubacteriales</taxon>
        <taxon>Clostridiaceae</taxon>
        <taxon>Clostridium</taxon>
    </lineage>
</organism>
<keyword id="KW-0963">Cytoplasm</keyword>
<keyword id="KW-0227">DNA damage</keyword>
<keyword id="KW-0233">DNA recombination</keyword>
<keyword id="KW-0234">DNA repair</keyword>
<keyword id="KW-0238">DNA-binding</keyword>
<proteinExistence type="inferred from homology"/>
<evidence type="ECO:0000255" key="1">
    <source>
        <dbReference type="HAMAP-Rule" id="MF_00031"/>
    </source>
</evidence>
<gene>
    <name evidence="1" type="primary">ruvA</name>
    <name type="ordered locus">CLK_2464</name>
</gene>
<name>RUVA_CLOBM</name>
<sequence length="197" mass="22142">MYEYIKGKYIDMYKDYIVIENNNIGYKIYTSGSTMAKLPSIGENIMLYTEQIVREDFIGIYGFLTKDELSMFKLLLTINGVGAKAALSLLSISNVSTLKYAIKVGDEKTITRAPGIGKKTAQRIILELKDKIEIDISEEDDEQIINKVTDDKKVLEAVAALVTLGYSEKEASKVINLCDKNNSLEQIIKEALKHLMK</sequence>